<protein>
    <recommendedName>
        <fullName evidence="1">DNA mismatch repair protein MutS</fullName>
    </recommendedName>
</protein>
<proteinExistence type="inferred from homology"/>
<organism>
    <name type="scientific">Escherichia coli O139:H28 (strain E24377A / ETEC)</name>
    <dbReference type="NCBI Taxonomy" id="331111"/>
    <lineage>
        <taxon>Bacteria</taxon>
        <taxon>Pseudomonadati</taxon>
        <taxon>Pseudomonadota</taxon>
        <taxon>Gammaproteobacteria</taxon>
        <taxon>Enterobacterales</taxon>
        <taxon>Enterobacteriaceae</taxon>
        <taxon>Escherichia</taxon>
    </lineage>
</organism>
<dbReference type="EMBL" id="CP000800">
    <property type="protein sequence ID" value="ABV18168.1"/>
    <property type="status" value="ALT_INIT"/>
    <property type="molecule type" value="Genomic_DNA"/>
</dbReference>
<dbReference type="RefSeq" id="WP_001696757.1">
    <property type="nucleotide sequence ID" value="NC_009801.1"/>
</dbReference>
<dbReference type="SMR" id="A7ZQH3"/>
<dbReference type="GeneID" id="75205622"/>
<dbReference type="KEGG" id="ecw:EcE24377A_3030"/>
<dbReference type="HOGENOM" id="CLU_002472_4_0_6"/>
<dbReference type="Proteomes" id="UP000001122">
    <property type="component" value="Chromosome"/>
</dbReference>
<dbReference type="GO" id="GO:0005829">
    <property type="term" value="C:cytosol"/>
    <property type="evidence" value="ECO:0007669"/>
    <property type="project" value="TreeGrafter"/>
</dbReference>
<dbReference type="GO" id="GO:0005524">
    <property type="term" value="F:ATP binding"/>
    <property type="evidence" value="ECO:0007669"/>
    <property type="project" value="UniProtKB-UniRule"/>
</dbReference>
<dbReference type="GO" id="GO:0140664">
    <property type="term" value="F:ATP-dependent DNA damage sensor activity"/>
    <property type="evidence" value="ECO:0007669"/>
    <property type="project" value="InterPro"/>
</dbReference>
<dbReference type="GO" id="GO:0003684">
    <property type="term" value="F:damaged DNA binding"/>
    <property type="evidence" value="ECO:0007669"/>
    <property type="project" value="UniProtKB-UniRule"/>
</dbReference>
<dbReference type="GO" id="GO:0030983">
    <property type="term" value="F:mismatched DNA binding"/>
    <property type="evidence" value="ECO:0007669"/>
    <property type="project" value="InterPro"/>
</dbReference>
<dbReference type="GO" id="GO:0006298">
    <property type="term" value="P:mismatch repair"/>
    <property type="evidence" value="ECO:0007669"/>
    <property type="project" value="UniProtKB-UniRule"/>
</dbReference>
<dbReference type="CDD" id="cd03284">
    <property type="entry name" value="ABC_MutS1"/>
    <property type="match status" value="1"/>
</dbReference>
<dbReference type="FunFam" id="1.10.1420.10:FF:000002">
    <property type="entry name" value="DNA mismatch repair protein MutS"/>
    <property type="match status" value="1"/>
</dbReference>
<dbReference type="FunFam" id="3.30.420.110:FF:000001">
    <property type="entry name" value="DNA mismatch repair protein MutS"/>
    <property type="match status" value="1"/>
</dbReference>
<dbReference type="FunFam" id="3.40.1170.10:FF:000001">
    <property type="entry name" value="DNA mismatch repair protein MutS"/>
    <property type="match status" value="1"/>
</dbReference>
<dbReference type="FunFam" id="3.40.50.300:FF:000283">
    <property type="entry name" value="DNA mismatch repair protein MutS"/>
    <property type="match status" value="1"/>
</dbReference>
<dbReference type="Gene3D" id="1.10.1420.10">
    <property type="match status" value="2"/>
</dbReference>
<dbReference type="Gene3D" id="6.10.140.430">
    <property type="match status" value="1"/>
</dbReference>
<dbReference type="Gene3D" id="3.40.1170.10">
    <property type="entry name" value="DNA repair protein MutS, domain I"/>
    <property type="match status" value="1"/>
</dbReference>
<dbReference type="Gene3D" id="3.30.420.110">
    <property type="entry name" value="MutS, connector domain"/>
    <property type="match status" value="1"/>
</dbReference>
<dbReference type="Gene3D" id="3.40.50.300">
    <property type="entry name" value="P-loop containing nucleotide triphosphate hydrolases"/>
    <property type="match status" value="1"/>
</dbReference>
<dbReference type="HAMAP" id="MF_00096">
    <property type="entry name" value="MutS"/>
    <property type="match status" value="1"/>
</dbReference>
<dbReference type="InterPro" id="IPR005748">
    <property type="entry name" value="DNA_mismatch_repair_MutS"/>
</dbReference>
<dbReference type="InterPro" id="IPR007695">
    <property type="entry name" value="DNA_mismatch_repair_MutS-lik_N"/>
</dbReference>
<dbReference type="InterPro" id="IPR017261">
    <property type="entry name" value="DNA_mismatch_repair_MutS/MSH"/>
</dbReference>
<dbReference type="InterPro" id="IPR000432">
    <property type="entry name" value="DNA_mismatch_repair_MutS_C"/>
</dbReference>
<dbReference type="InterPro" id="IPR007861">
    <property type="entry name" value="DNA_mismatch_repair_MutS_clamp"/>
</dbReference>
<dbReference type="InterPro" id="IPR007696">
    <property type="entry name" value="DNA_mismatch_repair_MutS_core"/>
</dbReference>
<dbReference type="InterPro" id="IPR016151">
    <property type="entry name" value="DNA_mismatch_repair_MutS_N"/>
</dbReference>
<dbReference type="InterPro" id="IPR036187">
    <property type="entry name" value="DNA_mismatch_repair_MutS_sf"/>
</dbReference>
<dbReference type="InterPro" id="IPR007860">
    <property type="entry name" value="DNA_mmatch_repair_MutS_con_dom"/>
</dbReference>
<dbReference type="InterPro" id="IPR045076">
    <property type="entry name" value="MutS"/>
</dbReference>
<dbReference type="InterPro" id="IPR036678">
    <property type="entry name" value="MutS_con_dom_sf"/>
</dbReference>
<dbReference type="InterPro" id="IPR027417">
    <property type="entry name" value="P-loop_NTPase"/>
</dbReference>
<dbReference type="NCBIfam" id="TIGR01070">
    <property type="entry name" value="mutS1"/>
    <property type="match status" value="1"/>
</dbReference>
<dbReference type="NCBIfam" id="NF003810">
    <property type="entry name" value="PRK05399.1"/>
    <property type="match status" value="1"/>
</dbReference>
<dbReference type="PANTHER" id="PTHR11361:SF34">
    <property type="entry name" value="DNA MISMATCH REPAIR PROTEIN MSH1, MITOCHONDRIAL"/>
    <property type="match status" value="1"/>
</dbReference>
<dbReference type="PANTHER" id="PTHR11361">
    <property type="entry name" value="DNA MISMATCH REPAIR PROTEIN MUTS FAMILY MEMBER"/>
    <property type="match status" value="1"/>
</dbReference>
<dbReference type="Pfam" id="PF01624">
    <property type="entry name" value="MutS_I"/>
    <property type="match status" value="1"/>
</dbReference>
<dbReference type="Pfam" id="PF05188">
    <property type="entry name" value="MutS_II"/>
    <property type="match status" value="1"/>
</dbReference>
<dbReference type="Pfam" id="PF05192">
    <property type="entry name" value="MutS_III"/>
    <property type="match status" value="1"/>
</dbReference>
<dbReference type="Pfam" id="PF05190">
    <property type="entry name" value="MutS_IV"/>
    <property type="match status" value="1"/>
</dbReference>
<dbReference type="Pfam" id="PF00488">
    <property type="entry name" value="MutS_V"/>
    <property type="match status" value="1"/>
</dbReference>
<dbReference type="PIRSF" id="PIRSF037677">
    <property type="entry name" value="DNA_mis_repair_Msh6"/>
    <property type="match status" value="1"/>
</dbReference>
<dbReference type="SMART" id="SM00534">
    <property type="entry name" value="MUTSac"/>
    <property type="match status" value="1"/>
</dbReference>
<dbReference type="SMART" id="SM00533">
    <property type="entry name" value="MUTSd"/>
    <property type="match status" value="1"/>
</dbReference>
<dbReference type="SUPFAM" id="SSF55271">
    <property type="entry name" value="DNA repair protein MutS, domain I"/>
    <property type="match status" value="1"/>
</dbReference>
<dbReference type="SUPFAM" id="SSF53150">
    <property type="entry name" value="DNA repair protein MutS, domain II"/>
    <property type="match status" value="1"/>
</dbReference>
<dbReference type="SUPFAM" id="SSF48334">
    <property type="entry name" value="DNA repair protein MutS, domain III"/>
    <property type="match status" value="1"/>
</dbReference>
<dbReference type="SUPFAM" id="SSF52540">
    <property type="entry name" value="P-loop containing nucleoside triphosphate hydrolases"/>
    <property type="match status" value="1"/>
</dbReference>
<dbReference type="PROSITE" id="PS00486">
    <property type="entry name" value="DNA_MISMATCH_REPAIR_2"/>
    <property type="match status" value="1"/>
</dbReference>
<keyword id="KW-0067">ATP-binding</keyword>
<keyword id="KW-0227">DNA damage</keyword>
<keyword id="KW-0234">DNA repair</keyword>
<keyword id="KW-0238">DNA-binding</keyword>
<keyword id="KW-0547">Nucleotide-binding</keyword>
<keyword id="KW-1185">Reference proteome</keyword>
<accession>A7ZQH3</accession>
<feature type="chain" id="PRO_0000335151" description="DNA mismatch repair protein MutS">
    <location>
        <begin position="1"/>
        <end position="855"/>
    </location>
</feature>
<feature type="binding site" evidence="1">
    <location>
        <begin position="616"/>
        <end position="623"/>
    </location>
    <ligand>
        <name>ATP</name>
        <dbReference type="ChEBI" id="CHEBI:30616"/>
    </ligand>
</feature>
<evidence type="ECO:0000255" key="1">
    <source>
        <dbReference type="HAMAP-Rule" id="MF_00096"/>
    </source>
</evidence>
<evidence type="ECO:0000305" key="2"/>
<gene>
    <name evidence="1" type="primary">mutS</name>
    <name type="ordered locus">EcE24377A_3030</name>
</gene>
<name>MUTS_ECO24</name>
<sequence length="855" mass="95605">MNENIDKDFSSHTPMMQQYLKLKAQHPEILLFYRMGDFYELFYDDAKRASQLLDISLTKRGASAGEPIPMAGIPYHAVENYLAKLVNQGESVAICEQIGDPATSKGPVERKVVRIVTPGTISDEALLQERQDNLLAAIWQDSKGFGYATLDISSGRFRLSEPADRETMAAELQRTNPAELLYAEDFAEMSLIEGRRGLRRRPLWEFEIDTARQQLNLQFGTRDLVGFGVENAPRGLCAAGCLLQYAKDTQRTTLPHIRSITMEREQDSIIMDAATRRNLEITQNLAGGAENTLASVLDCTVTPMGSRMLKRWLHMPVRDTRVLLERQQTIGALQDFTAELQPVLRQVGDLERILARLALRTARPRDLARMRHAFQQLPELRAQLETVDSAPVQALREKMGEFAELRDLLERAIIDTPPVLVRDGGVIASGYNEELDEWRALADGATDYLERLEVRERERTGLDTLKVGFNAVHGYYIQISRGQSHLAPINYMRRQTLKNAERYIIPELKEYEDKVLTSKGKALALEKQLYEELFDLLLPHLEALQQSASALAELDVLVNLAERAYTLNYTCPTFIDKPGIRITEGRHPVVEQVLNEPFIANPLNLSPQRRMLIITGPNMGGKSTYMRQTALIALMAYIGSYVPAQKVEIGPIDRIFTRVGAADDLASGRSTFMVEMTETANILHNATEYSLVLMDEIGRGTSTYDGLSLAWACAENLANKIKALTLFATHYFELTQLPEKMEGVANVHLDALEHGDTIAFMHSVQDGAASKSYGLAVAALAGVPKEVIKRARQKLRELESISPNAAATQVDGTQMSLLSVPEEISPAVEALENLDPDSLTPRQALEWIYRLKSLV</sequence>
<reference key="1">
    <citation type="journal article" date="2008" name="J. Bacteriol.">
        <title>The pangenome structure of Escherichia coli: comparative genomic analysis of E. coli commensal and pathogenic isolates.</title>
        <authorList>
            <person name="Rasko D.A."/>
            <person name="Rosovitz M.J."/>
            <person name="Myers G.S.A."/>
            <person name="Mongodin E.F."/>
            <person name="Fricke W.F."/>
            <person name="Gajer P."/>
            <person name="Crabtree J."/>
            <person name="Sebaihia M."/>
            <person name="Thomson N.R."/>
            <person name="Chaudhuri R."/>
            <person name="Henderson I.R."/>
            <person name="Sperandio V."/>
            <person name="Ravel J."/>
        </authorList>
    </citation>
    <scope>NUCLEOTIDE SEQUENCE [LARGE SCALE GENOMIC DNA]</scope>
    <source>
        <strain>E24377A / ETEC</strain>
    </source>
</reference>
<comment type="function">
    <text evidence="1">This protein is involved in the repair of mismatches in DNA. It is possible that it carries out the mismatch recognition step. This protein has a weak ATPase activity.</text>
</comment>
<comment type="similarity">
    <text evidence="1">Belongs to the DNA mismatch repair MutS family.</text>
</comment>
<comment type="sequence caution" evidence="2">
    <conflict type="erroneous initiation">
        <sequence resource="EMBL-CDS" id="ABV18168"/>
    </conflict>
</comment>